<proteinExistence type="inferred from homology"/>
<accession>Q0HMP1</accession>
<dbReference type="EMBL" id="CP000446">
    <property type="protein sequence ID" value="ABI37676.1"/>
    <property type="molecule type" value="Genomic_DNA"/>
</dbReference>
<dbReference type="RefSeq" id="WP_011621397.1">
    <property type="nucleotide sequence ID" value="NC_008321.1"/>
</dbReference>
<dbReference type="SMR" id="Q0HMP1"/>
<dbReference type="KEGG" id="she:Shewmr4_0596"/>
<dbReference type="HOGENOM" id="CLU_004131_4_2_6"/>
<dbReference type="GO" id="GO:0032300">
    <property type="term" value="C:mismatch repair complex"/>
    <property type="evidence" value="ECO:0007669"/>
    <property type="project" value="InterPro"/>
</dbReference>
<dbReference type="GO" id="GO:0005524">
    <property type="term" value="F:ATP binding"/>
    <property type="evidence" value="ECO:0007669"/>
    <property type="project" value="InterPro"/>
</dbReference>
<dbReference type="GO" id="GO:0016887">
    <property type="term" value="F:ATP hydrolysis activity"/>
    <property type="evidence" value="ECO:0007669"/>
    <property type="project" value="InterPro"/>
</dbReference>
<dbReference type="GO" id="GO:0140664">
    <property type="term" value="F:ATP-dependent DNA damage sensor activity"/>
    <property type="evidence" value="ECO:0007669"/>
    <property type="project" value="InterPro"/>
</dbReference>
<dbReference type="GO" id="GO:0030983">
    <property type="term" value="F:mismatched DNA binding"/>
    <property type="evidence" value="ECO:0007669"/>
    <property type="project" value="InterPro"/>
</dbReference>
<dbReference type="GO" id="GO:0006298">
    <property type="term" value="P:mismatch repair"/>
    <property type="evidence" value="ECO:0007669"/>
    <property type="project" value="UniProtKB-UniRule"/>
</dbReference>
<dbReference type="CDD" id="cd16926">
    <property type="entry name" value="HATPase_MutL-MLH-PMS-like"/>
    <property type="match status" value="1"/>
</dbReference>
<dbReference type="CDD" id="cd03482">
    <property type="entry name" value="MutL_Trans_MutL"/>
    <property type="match status" value="1"/>
</dbReference>
<dbReference type="FunFam" id="3.30.230.10:FF:000013">
    <property type="entry name" value="DNA mismatch repair endonuclease MutL"/>
    <property type="match status" value="1"/>
</dbReference>
<dbReference type="FunFam" id="3.30.565.10:FF:000003">
    <property type="entry name" value="DNA mismatch repair endonuclease MutL"/>
    <property type="match status" value="1"/>
</dbReference>
<dbReference type="Gene3D" id="3.30.230.10">
    <property type="match status" value="1"/>
</dbReference>
<dbReference type="Gene3D" id="3.30.565.10">
    <property type="entry name" value="Histidine kinase-like ATPase, C-terminal domain"/>
    <property type="match status" value="1"/>
</dbReference>
<dbReference type="Gene3D" id="3.30.1370.100">
    <property type="entry name" value="MutL, C-terminal domain, regulatory subdomain"/>
    <property type="match status" value="1"/>
</dbReference>
<dbReference type="HAMAP" id="MF_00149">
    <property type="entry name" value="DNA_mis_repair"/>
    <property type="match status" value="1"/>
</dbReference>
<dbReference type="InterPro" id="IPR014762">
    <property type="entry name" value="DNA_mismatch_repair_CS"/>
</dbReference>
<dbReference type="InterPro" id="IPR020667">
    <property type="entry name" value="DNA_mismatch_repair_MutL"/>
</dbReference>
<dbReference type="InterPro" id="IPR013507">
    <property type="entry name" value="DNA_mismatch_S5_2-like"/>
</dbReference>
<dbReference type="InterPro" id="IPR036890">
    <property type="entry name" value="HATPase_C_sf"/>
</dbReference>
<dbReference type="InterPro" id="IPR002099">
    <property type="entry name" value="MutL/Mlh/PMS"/>
</dbReference>
<dbReference type="InterPro" id="IPR038973">
    <property type="entry name" value="MutL/Mlh/Pms-like"/>
</dbReference>
<dbReference type="InterPro" id="IPR014790">
    <property type="entry name" value="MutL_C"/>
</dbReference>
<dbReference type="InterPro" id="IPR042121">
    <property type="entry name" value="MutL_C_regsub"/>
</dbReference>
<dbReference type="InterPro" id="IPR037198">
    <property type="entry name" value="MutL_C_sf"/>
</dbReference>
<dbReference type="InterPro" id="IPR020568">
    <property type="entry name" value="Ribosomal_Su5_D2-typ_SF"/>
</dbReference>
<dbReference type="InterPro" id="IPR014721">
    <property type="entry name" value="Ribsml_uS5_D2-typ_fold_subgr"/>
</dbReference>
<dbReference type="NCBIfam" id="TIGR00585">
    <property type="entry name" value="mutl"/>
    <property type="match status" value="1"/>
</dbReference>
<dbReference type="NCBIfam" id="NF000948">
    <property type="entry name" value="PRK00095.1-1"/>
    <property type="match status" value="1"/>
</dbReference>
<dbReference type="PANTHER" id="PTHR10073">
    <property type="entry name" value="DNA MISMATCH REPAIR PROTEIN MLH, PMS, MUTL"/>
    <property type="match status" value="1"/>
</dbReference>
<dbReference type="PANTHER" id="PTHR10073:SF12">
    <property type="entry name" value="DNA MISMATCH REPAIR PROTEIN MLH1"/>
    <property type="match status" value="1"/>
</dbReference>
<dbReference type="Pfam" id="PF01119">
    <property type="entry name" value="DNA_mis_repair"/>
    <property type="match status" value="1"/>
</dbReference>
<dbReference type="Pfam" id="PF13589">
    <property type="entry name" value="HATPase_c_3"/>
    <property type="match status" value="1"/>
</dbReference>
<dbReference type="Pfam" id="PF08676">
    <property type="entry name" value="MutL_C"/>
    <property type="match status" value="1"/>
</dbReference>
<dbReference type="SMART" id="SM01340">
    <property type="entry name" value="DNA_mis_repair"/>
    <property type="match status" value="1"/>
</dbReference>
<dbReference type="SMART" id="SM00853">
    <property type="entry name" value="MutL_C"/>
    <property type="match status" value="1"/>
</dbReference>
<dbReference type="SUPFAM" id="SSF55874">
    <property type="entry name" value="ATPase domain of HSP90 chaperone/DNA topoisomerase II/histidine kinase"/>
    <property type="match status" value="1"/>
</dbReference>
<dbReference type="SUPFAM" id="SSF118116">
    <property type="entry name" value="DNA mismatch repair protein MutL"/>
    <property type="match status" value="1"/>
</dbReference>
<dbReference type="SUPFAM" id="SSF54211">
    <property type="entry name" value="Ribosomal protein S5 domain 2-like"/>
    <property type="match status" value="1"/>
</dbReference>
<dbReference type="PROSITE" id="PS00058">
    <property type="entry name" value="DNA_MISMATCH_REPAIR_1"/>
    <property type="match status" value="1"/>
</dbReference>
<gene>
    <name evidence="1" type="primary">mutL</name>
    <name type="ordered locus">Shewmr4_0596</name>
</gene>
<comment type="function">
    <text evidence="1">This protein is involved in the repair of mismatches in DNA. It is required for dam-dependent methyl-directed DNA mismatch repair. May act as a 'molecular matchmaker', a protein that promotes the formation of a stable complex between two or more DNA-binding proteins in an ATP-dependent manner without itself being part of a final effector complex.</text>
</comment>
<comment type="similarity">
    <text evidence="1">Belongs to the DNA mismatch repair MutL/HexB family.</text>
</comment>
<keyword id="KW-0227">DNA damage</keyword>
<keyword id="KW-0234">DNA repair</keyword>
<feature type="chain" id="PRO_1000076719" description="DNA mismatch repair protein MutL">
    <location>
        <begin position="1"/>
        <end position="644"/>
    </location>
</feature>
<feature type="region of interest" description="Disordered" evidence="2">
    <location>
        <begin position="353"/>
        <end position="399"/>
    </location>
</feature>
<feature type="region of interest" description="Disordered" evidence="2">
    <location>
        <begin position="420"/>
        <end position="440"/>
    </location>
</feature>
<feature type="compositionally biased region" description="Polar residues" evidence="2">
    <location>
        <begin position="370"/>
        <end position="381"/>
    </location>
</feature>
<feature type="compositionally biased region" description="Basic and acidic residues" evidence="2">
    <location>
        <begin position="383"/>
        <end position="399"/>
    </location>
</feature>
<protein>
    <recommendedName>
        <fullName evidence="1">DNA mismatch repair protein MutL</fullName>
    </recommendedName>
</protein>
<reference key="1">
    <citation type="submission" date="2006-08" db="EMBL/GenBank/DDBJ databases">
        <title>Complete sequence of Shewanella sp. MR-4.</title>
        <authorList>
            <consortium name="US DOE Joint Genome Institute"/>
            <person name="Copeland A."/>
            <person name="Lucas S."/>
            <person name="Lapidus A."/>
            <person name="Barry K."/>
            <person name="Detter J.C."/>
            <person name="Glavina del Rio T."/>
            <person name="Hammon N."/>
            <person name="Israni S."/>
            <person name="Dalin E."/>
            <person name="Tice H."/>
            <person name="Pitluck S."/>
            <person name="Kiss H."/>
            <person name="Brettin T."/>
            <person name="Bruce D."/>
            <person name="Han C."/>
            <person name="Tapia R."/>
            <person name="Gilna P."/>
            <person name="Schmutz J."/>
            <person name="Larimer F."/>
            <person name="Land M."/>
            <person name="Hauser L."/>
            <person name="Kyrpides N."/>
            <person name="Mikhailova N."/>
            <person name="Nealson K."/>
            <person name="Konstantinidis K."/>
            <person name="Klappenbach J."/>
            <person name="Tiedje J."/>
            <person name="Richardson P."/>
        </authorList>
    </citation>
    <scope>NUCLEOTIDE SEQUENCE [LARGE SCALE GENOMIC DNA]</scope>
    <source>
        <strain>MR-4</strain>
    </source>
</reference>
<sequence length="644" mass="71875">MGIQILPPQLANQIAAGEVVERPASVVKELVENSLDAGATRIDIEIDKGGSKLIKIRDNGSGIPKDELALALSRHATSKLHSLDDLEAILSFGFRGEALASISSVSRLTLTSRTAEQTEAWQAYAEGVDMAVKVMPAAHPVGSTIEVVDLFFNTPARRRFLKSDKTEFTHIDEWLKRIALVRGDIHFTLTHNGKTVRNYRPAMNEPQYLQRLTQVAGRQFADEALRVECQHDDLRLSGYLQSPWSTVLTDTHYFYVNGRLVRDRLVNHAVRQAFAQKAEVEQPGYVLMLDIDPHQVDVNVHPAKHEVRFHQSRYVHDYILQALQSALEEAGELGFEHPFEPSSPQVRDEVSLSESGTQTQTEHHAFELQSPESKTHSTWNEASRVDTSRVEISRDSQLTERTRDIASARPYSGVQSNAYGSMAVPRESRSGPTGESRARAELPSKAAIASYGELLQTPSYSVQDKPYQPVLAMPAMLNGQYWVLAQGQNLSLLPIQSVALATRSHEIETKLATGLIGQPLLMPVSIAADTDWPALLEEHETLIRQLGLELTIRYQQLIIKKVPPYLRDSQLAKVIPEWLQSLRFEAPAPNALAVWLAEQSLTGFTSAADIWAAYSQLTEEKRQQIADKAVSLPWQSWLEEQAIE</sequence>
<organism>
    <name type="scientific">Shewanella sp. (strain MR-4)</name>
    <dbReference type="NCBI Taxonomy" id="60480"/>
    <lineage>
        <taxon>Bacteria</taxon>
        <taxon>Pseudomonadati</taxon>
        <taxon>Pseudomonadota</taxon>
        <taxon>Gammaproteobacteria</taxon>
        <taxon>Alteromonadales</taxon>
        <taxon>Shewanellaceae</taxon>
        <taxon>Shewanella</taxon>
    </lineage>
</organism>
<evidence type="ECO:0000255" key="1">
    <source>
        <dbReference type="HAMAP-Rule" id="MF_00149"/>
    </source>
</evidence>
<evidence type="ECO:0000256" key="2">
    <source>
        <dbReference type="SAM" id="MobiDB-lite"/>
    </source>
</evidence>
<name>MUTL_SHESM</name>